<protein>
    <recommendedName>
        <fullName evidence="1">Large ribosomal subunit protein bL20c</fullName>
    </recommendedName>
    <alternativeName>
        <fullName evidence="2">50S ribosomal protein L20, chloroplastic</fullName>
    </alternativeName>
</protein>
<proteinExistence type="inferred from homology"/>
<dbReference type="EMBL" id="AF494278">
    <property type="protein sequence ID" value="AAM96557.1"/>
    <property type="molecule type" value="Genomic_DNA"/>
</dbReference>
<dbReference type="RefSeq" id="NP_683798.1">
    <property type="nucleotide sequence ID" value="NC_004115.1"/>
</dbReference>
<dbReference type="SMR" id="Q8M9Y8"/>
<dbReference type="GeneID" id="860713"/>
<dbReference type="GO" id="GO:0009507">
    <property type="term" value="C:chloroplast"/>
    <property type="evidence" value="ECO:0007669"/>
    <property type="project" value="UniProtKB-SubCell"/>
</dbReference>
<dbReference type="GO" id="GO:1990904">
    <property type="term" value="C:ribonucleoprotein complex"/>
    <property type="evidence" value="ECO:0007669"/>
    <property type="project" value="UniProtKB-KW"/>
</dbReference>
<dbReference type="GO" id="GO:0005840">
    <property type="term" value="C:ribosome"/>
    <property type="evidence" value="ECO:0007669"/>
    <property type="project" value="UniProtKB-KW"/>
</dbReference>
<dbReference type="GO" id="GO:0019843">
    <property type="term" value="F:rRNA binding"/>
    <property type="evidence" value="ECO:0007669"/>
    <property type="project" value="UniProtKB-UniRule"/>
</dbReference>
<dbReference type="GO" id="GO:0003735">
    <property type="term" value="F:structural constituent of ribosome"/>
    <property type="evidence" value="ECO:0007669"/>
    <property type="project" value="InterPro"/>
</dbReference>
<dbReference type="GO" id="GO:0000027">
    <property type="term" value="P:ribosomal large subunit assembly"/>
    <property type="evidence" value="ECO:0007669"/>
    <property type="project" value="UniProtKB-UniRule"/>
</dbReference>
<dbReference type="GO" id="GO:0006412">
    <property type="term" value="P:translation"/>
    <property type="evidence" value="ECO:0007669"/>
    <property type="project" value="InterPro"/>
</dbReference>
<dbReference type="CDD" id="cd07026">
    <property type="entry name" value="Ribosomal_L20"/>
    <property type="match status" value="1"/>
</dbReference>
<dbReference type="FunFam" id="1.10.1900.20:FF:000001">
    <property type="entry name" value="50S ribosomal protein L20"/>
    <property type="match status" value="1"/>
</dbReference>
<dbReference type="Gene3D" id="6.10.160.10">
    <property type="match status" value="1"/>
</dbReference>
<dbReference type="Gene3D" id="1.10.1900.20">
    <property type="entry name" value="Ribosomal protein L20"/>
    <property type="match status" value="1"/>
</dbReference>
<dbReference type="HAMAP" id="MF_00382">
    <property type="entry name" value="Ribosomal_bL20"/>
    <property type="match status" value="1"/>
</dbReference>
<dbReference type="InterPro" id="IPR005813">
    <property type="entry name" value="Ribosomal_bL20"/>
</dbReference>
<dbReference type="InterPro" id="IPR049946">
    <property type="entry name" value="RIBOSOMAL_L20_CS"/>
</dbReference>
<dbReference type="InterPro" id="IPR035566">
    <property type="entry name" value="Ribosomal_protein_bL20_C"/>
</dbReference>
<dbReference type="NCBIfam" id="TIGR01032">
    <property type="entry name" value="rplT_bact"/>
    <property type="match status" value="1"/>
</dbReference>
<dbReference type="PANTHER" id="PTHR10986">
    <property type="entry name" value="39S RIBOSOMAL PROTEIN L20"/>
    <property type="match status" value="1"/>
</dbReference>
<dbReference type="Pfam" id="PF00453">
    <property type="entry name" value="Ribosomal_L20"/>
    <property type="match status" value="1"/>
</dbReference>
<dbReference type="PRINTS" id="PR00062">
    <property type="entry name" value="RIBOSOMALL20"/>
</dbReference>
<dbReference type="SUPFAM" id="SSF74731">
    <property type="entry name" value="Ribosomal protein L20"/>
    <property type="match status" value="1"/>
</dbReference>
<dbReference type="PROSITE" id="PS00937">
    <property type="entry name" value="RIBOSOMAL_L20"/>
    <property type="match status" value="1"/>
</dbReference>
<geneLocation type="chloroplast"/>
<comment type="function">
    <text evidence="1">Binds directly to 23S ribosomal RNA and is necessary for the in vitro assembly process of the 50S ribosomal subunit. It is not involved in the protein synthesizing functions of that subunit.</text>
</comment>
<comment type="subcellular location">
    <subcellularLocation>
        <location>Plastid</location>
        <location>Chloroplast</location>
    </subcellularLocation>
</comment>
<comment type="similarity">
    <text evidence="1">Belongs to the bacterial ribosomal protein bL20 family.</text>
</comment>
<reference key="1">
    <citation type="journal article" date="2002" name="Proc. Natl. Acad. Sci. U.S.A.">
        <title>The chloroplast and mitochondrial genome sequences of the charophyte Chaetosphaeridium globosum: insights into the timing of the events that restructured organelle DNAs within the green algal lineage that led to land plants.</title>
        <authorList>
            <person name="Turmel M."/>
            <person name="Otis C."/>
            <person name="Lemieux C."/>
        </authorList>
    </citation>
    <scope>NUCLEOTIDE SEQUENCE [LARGE SCALE GENOMIC DNA]</scope>
    <source>
        <strain>M1311</strain>
    </source>
</reference>
<keyword id="KW-0150">Chloroplast</keyword>
<keyword id="KW-0934">Plastid</keyword>
<keyword id="KW-0687">Ribonucleoprotein</keyword>
<keyword id="KW-0689">Ribosomal protein</keyword>
<keyword id="KW-0694">RNA-binding</keyword>
<keyword id="KW-0699">rRNA-binding</keyword>
<organism>
    <name type="scientific">Chaetosphaeridium globosum</name>
    <name type="common">Charophycean green alga</name>
    <name type="synonym">Herposteiron globosum</name>
    <dbReference type="NCBI Taxonomy" id="96477"/>
    <lineage>
        <taxon>Eukaryota</taxon>
        <taxon>Viridiplantae</taxon>
        <taxon>Streptophyta</taxon>
        <taxon>Coleochaetophyceae</taxon>
        <taxon>Coleochaetales</taxon>
        <taxon>Chaetosphaeridiaceae</taxon>
        <taxon>Chaetosphaeridium</taxon>
    </lineage>
</organism>
<accession>Q8M9Y8</accession>
<sequence length="115" mass="13605">MTRVKRGYVARRRRKKILHLTSGFYGAHSRLFRVANQKAIRALAYSHIDRAKRKRNMRSLWICRINAVAREQNISYSYLIKSLKEKKILLNRKMLAQLAVLDKPSFIKLINTHLN</sequence>
<feature type="chain" id="PRO_0000177282" description="Large ribosomal subunit protein bL20c">
    <location>
        <begin position="1"/>
        <end position="115"/>
    </location>
</feature>
<evidence type="ECO:0000255" key="1">
    <source>
        <dbReference type="HAMAP-Rule" id="MF_00382"/>
    </source>
</evidence>
<evidence type="ECO:0000305" key="2"/>
<gene>
    <name evidence="1" type="primary">rpl20</name>
</gene>
<name>RK20_CHAGL</name>